<evidence type="ECO:0000255" key="1">
    <source>
        <dbReference type="HAMAP-Rule" id="MF_01396"/>
    </source>
</evidence>
<reference key="1">
    <citation type="journal article" date="2008" name="J. Bacteriol.">
        <title>The complete genome sequence of Escherichia coli DH10B: insights into the biology of a laboratory workhorse.</title>
        <authorList>
            <person name="Durfee T."/>
            <person name="Nelson R."/>
            <person name="Baldwin S."/>
            <person name="Plunkett G. III"/>
            <person name="Burland V."/>
            <person name="Mau B."/>
            <person name="Petrosino J.F."/>
            <person name="Qin X."/>
            <person name="Muzny D.M."/>
            <person name="Ayele M."/>
            <person name="Gibbs R.A."/>
            <person name="Csorgo B."/>
            <person name="Posfai G."/>
            <person name="Weinstock G.M."/>
            <person name="Blattner F.R."/>
        </authorList>
    </citation>
    <scope>NUCLEOTIDE SEQUENCE [LARGE SCALE GENOMIC DNA]</scope>
    <source>
        <strain>K12 / DH10B</strain>
    </source>
</reference>
<sequence length="79" mass="8256">MENLNMDLLYMAAAVMMGLAAIGAAIGIGILGGKFLEGAARQPDLIPLLRTQFFIVMGLVDAIPMIAVGLGLYVMFAVA</sequence>
<dbReference type="EMBL" id="CP000948">
    <property type="protein sequence ID" value="ACB04780.1"/>
    <property type="molecule type" value="Genomic_DNA"/>
</dbReference>
<dbReference type="RefSeq" id="WP_000429386.1">
    <property type="nucleotide sequence ID" value="NC_010473.1"/>
</dbReference>
<dbReference type="SMR" id="B1X9W5"/>
<dbReference type="GeneID" id="98390858"/>
<dbReference type="KEGG" id="ecd:ECDH10B_3924"/>
<dbReference type="HOGENOM" id="CLU_148047_1_0_6"/>
<dbReference type="GO" id="GO:0005886">
    <property type="term" value="C:plasma membrane"/>
    <property type="evidence" value="ECO:0007669"/>
    <property type="project" value="UniProtKB-SubCell"/>
</dbReference>
<dbReference type="GO" id="GO:0045259">
    <property type="term" value="C:proton-transporting ATP synthase complex"/>
    <property type="evidence" value="ECO:0007669"/>
    <property type="project" value="UniProtKB-KW"/>
</dbReference>
<dbReference type="GO" id="GO:0033177">
    <property type="term" value="C:proton-transporting two-sector ATPase complex, proton-transporting domain"/>
    <property type="evidence" value="ECO:0007669"/>
    <property type="project" value="InterPro"/>
</dbReference>
<dbReference type="GO" id="GO:0008289">
    <property type="term" value="F:lipid binding"/>
    <property type="evidence" value="ECO:0007669"/>
    <property type="project" value="UniProtKB-KW"/>
</dbReference>
<dbReference type="GO" id="GO:0046933">
    <property type="term" value="F:proton-transporting ATP synthase activity, rotational mechanism"/>
    <property type="evidence" value="ECO:0007669"/>
    <property type="project" value="UniProtKB-UniRule"/>
</dbReference>
<dbReference type="CDD" id="cd18185">
    <property type="entry name" value="ATP-synt_Fo_c_ATPE"/>
    <property type="match status" value="1"/>
</dbReference>
<dbReference type="FunFam" id="1.20.20.10:FF:000002">
    <property type="entry name" value="ATP synthase subunit c"/>
    <property type="match status" value="1"/>
</dbReference>
<dbReference type="Gene3D" id="1.20.20.10">
    <property type="entry name" value="F1F0 ATP synthase subunit C"/>
    <property type="match status" value="1"/>
</dbReference>
<dbReference type="HAMAP" id="MF_01396">
    <property type="entry name" value="ATP_synth_c_bact"/>
    <property type="match status" value="1"/>
</dbReference>
<dbReference type="InterPro" id="IPR005953">
    <property type="entry name" value="ATP_synth_csu_bac/chlpt"/>
</dbReference>
<dbReference type="InterPro" id="IPR000454">
    <property type="entry name" value="ATP_synth_F0_csu"/>
</dbReference>
<dbReference type="InterPro" id="IPR020537">
    <property type="entry name" value="ATP_synth_F0_csu_DDCD_BS"/>
</dbReference>
<dbReference type="InterPro" id="IPR038662">
    <property type="entry name" value="ATP_synth_F0_csu_sf"/>
</dbReference>
<dbReference type="InterPro" id="IPR002379">
    <property type="entry name" value="ATPase_proteolipid_c-like_dom"/>
</dbReference>
<dbReference type="InterPro" id="IPR035921">
    <property type="entry name" value="F/V-ATP_Csub_sf"/>
</dbReference>
<dbReference type="NCBIfam" id="TIGR01260">
    <property type="entry name" value="ATP_synt_c"/>
    <property type="match status" value="1"/>
</dbReference>
<dbReference type="NCBIfam" id="NF005363">
    <property type="entry name" value="PRK06876.1"/>
    <property type="match status" value="1"/>
</dbReference>
<dbReference type="Pfam" id="PF00137">
    <property type="entry name" value="ATP-synt_C"/>
    <property type="match status" value="1"/>
</dbReference>
<dbReference type="PRINTS" id="PR00124">
    <property type="entry name" value="ATPASEC"/>
</dbReference>
<dbReference type="SUPFAM" id="SSF81333">
    <property type="entry name" value="F1F0 ATP synthase subunit C"/>
    <property type="match status" value="1"/>
</dbReference>
<dbReference type="PROSITE" id="PS00605">
    <property type="entry name" value="ATPASE_C"/>
    <property type="match status" value="1"/>
</dbReference>
<proteinExistence type="inferred from homology"/>
<keyword id="KW-0066">ATP synthesis</keyword>
<keyword id="KW-0997">Cell inner membrane</keyword>
<keyword id="KW-1003">Cell membrane</keyword>
<keyword id="KW-0138">CF(0)</keyword>
<keyword id="KW-0375">Hydrogen ion transport</keyword>
<keyword id="KW-0406">Ion transport</keyword>
<keyword id="KW-0446">Lipid-binding</keyword>
<keyword id="KW-0472">Membrane</keyword>
<keyword id="KW-0812">Transmembrane</keyword>
<keyword id="KW-1133">Transmembrane helix</keyword>
<keyword id="KW-0813">Transport</keyword>
<gene>
    <name evidence="1" type="primary">atpE</name>
    <name type="ordered locus">ECDH10B_3924</name>
</gene>
<protein>
    <recommendedName>
        <fullName evidence="1">ATP synthase subunit c</fullName>
    </recommendedName>
    <alternativeName>
        <fullName evidence="1">ATP synthase F(0) sector subunit c</fullName>
    </alternativeName>
    <alternativeName>
        <fullName evidence="1">F-type ATPase subunit c</fullName>
        <shortName evidence="1">F-ATPase subunit c</shortName>
    </alternativeName>
    <alternativeName>
        <fullName evidence="1">Lipid-binding protein</fullName>
    </alternativeName>
</protein>
<accession>B1X9W5</accession>
<organism>
    <name type="scientific">Escherichia coli (strain K12 / DH10B)</name>
    <dbReference type="NCBI Taxonomy" id="316385"/>
    <lineage>
        <taxon>Bacteria</taxon>
        <taxon>Pseudomonadati</taxon>
        <taxon>Pseudomonadota</taxon>
        <taxon>Gammaproteobacteria</taxon>
        <taxon>Enterobacterales</taxon>
        <taxon>Enterobacteriaceae</taxon>
        <taxon>Escherichia</taxon>
    </lineage>
</organism>
<name>ATPL_ECODH</name>
<comment type="function">
    <text evidence="1">F(1)F(0) ATP synthase produces ATP from ADP in the presence of a proton or sodium gradient. F-type ATPases consist of two structural domains, F(1) containing the extramembraneous catalytic core and F(0) containing the membrane proton channel, linked together by a central stalk and a peripheral stalk. During catalysis, ATP synthesis in the catalytic domain of F(1) is coupled via a rotary mechanism of the central stalk subunits to proton translocation.</text>
</comment>
<comment type="function">
    <text evidence="1">Key component of the F(0) channel; it plays a direct role in translocation across the membrane. A homomeric c-ring of between 10-14 subunits forms the central stalk rotor element with the F(1) delta and epsilon subunits.</text>
</comment>
<comment type="subunit">
    <text evidence="1">F-type ATPases have 2 components, F(1) - the catalytic core - and F(0) - the membrane proton channel. F(1) has five subunits: alpha(3), beta(3), gamma(1), delta(1), epsilon(1). F(0) has three main subunits: a(1), b(2) and c(10-14). The alpha and beta chains form an alternating ring which encloses part of the gamma chain. F(1) is attached to F(0) by a central stalk formed by the gamma and epsilon chains, while a peripheral stalk is formed by the delta and b chains.</text>
</comment>
<comment type="subcellular location">
    <subcellularLocation>
        <location evidence="1">Cell inner membrane</location>
        <topology evidence="1">Multi-pass membrane protein</topology>
    </subcellularLocation>
</comment>
<comment type="similarity">
    <text evidence="1">Belongs to the ATPase C chain family.</text>
</comment>
<feature type="chain" id="PRO_1000184368" description="ATP synthase subunit c">
    <location>
        <begin position="1"/>
        <end position="79"/>
    </location>
</feature>
<feature type="transmembrane region" description="Helical" evidence="1">
    <location>
        <begin position="11"/>
        <end position="31"/>
    </location>
</feature>
<feature type="transmembrane region" description="Helical" evidence="1">
    <location>
        <begin position="53"/>
        <end position="73"/>
    </location>
</feature>
<feature type="site" description="Reversibly protonated during proton transport" evidence="1">
    <location>
        <position position="61"/>
    </location>
</feature>